<comment type="developmental stage">
    <text evidence="2">The concentration of AAC-rich mRNAs is low in dormant spores and growing cells, but increases during spore-germination and multicellular development.</text>
</comment>
<comment type="miscellaneous">
    <text>Several proteins derive from AAC-rich mRNA, which, due to a frameshift also have ACA and CAA codons and thus are Asn-, Thr- or Gln-rich.</text>
</comment>
<sequence>MKRTSNRNEEATAKLSSSTTITTTTTNKYYNMANAEKSSKSTTISNLIPKYSLFNEPNNDNDTNSSTRPNKQQKLLKSNESTTSTTTTTTPITTTTTTTTTTTTPNLSKYYNYNLYIEKQNEKQNLPTTETETTTITPTLTTTTTTTTTTTTTTTKQIQNTTTSTINHFLPLIIQKEIIFLLVELGSFLNARKVCKYWKKVCNGCVENLNIYFTDIHLSASVKHVSEVFVKSLNSDYFHLQSVSFINGAKNSISYSEFYFNNVILPFIENVVRYNQTIENFTIKGFPITRINNKSSQQLLPSYKLYHSTSVPSSPPPPPPPPPPQIQQPTITAPTSTTAIAVSSTTTTATGQTLNNNNNNNNIPKGLNYYLTNNFKLKKINLKNIGLDSRDKFDFFSSLSSSVNNTLETLIICDNIGDEGMQLLSVILIKNLLKVLKRLELQKNQFTNQSAYYLNKVLSCEQLQLETLNLSSNRIDEQGLIMMKDGFGRNKSLKEFIFSKNRLGNTDSVDFGKSITSLDLHDSMVGSKQSIKGLSQYLKFNESITSLNLSFNHIGSNEAIKSLSKSFAVNQTLKFVDLSFNKINSNFGLDHLVSSLLINHSIHSISLQSNQIDNTSAITLSQLFNSSRQLFSPFKYLNLSGNKIGIGGLKKLINDLSKYSKTHIIYNNNDDNNNNKNENENKSKIKNLSFNNNNNNFVKIIKNYHDTIPIIRTINNSNGKNLLEEEVEQVINSSSNDTNQNDNINNENNLTEISIDLSSNSPLEVSKVIGLIPRYKSKLTFADRKPVKKYKLVKLLF</sequence>
<dbReference type="EMBL" id="AAFI02000186">
    <property type="protein sequence ID" value="EAL61460.1"/>
    <property type="molecule type" value="Genomic_DNA"/>
</dbReference>
<dbReference type="EMBL" id="X16525">
    <property type="protein sequence ID" value="CAA34532.1"/>
    <property type="molecule type" value="mRNA"/>
</dbReference>
<dbReference type="PIR" id="S05358">
    <property type="entry name" value="S05358"/>
</dbReference>
<dbReference type="RefSeq" id="XP_629873.1">
    <property type="nucleotide sequence ID" value="XM_629871.1"/>
</dbReference>
<dbReference type="SMR" id="P14195"/>
<dbReference type="FunCoup" id="P14195">
    <property type="interactions" value="435"/>
</dbReference>
<dbReference type="PaxDb" id="44689-DDB0201568"/>
<dbReference type="EnsemblProtists" id="EAL61460">
    <property type="protein sequence ID" value="EAL61460"/>
    <property type="gene ID" value="DDB_G0291860"/>
</dbReference>
<dbReference type="GeneID" id="8628371"/>
<dbReference type="KEGG" id="ddi:DDB_G0291860"/>
<dbReference type="dictyBase" id="DDB_G0291860"/>
<dbReference type="VEuPathDB" id="AmoebaDB:DDB_G0291860"/>
<dbReference type="eggNOG" id="KOG4308">
    <property type="taxonomic scope" value="Eukaryota"/>
</dbReference>
<dbReference type="HOGENOM" id="CLU_352838_0_0_1"/>
<dbReference type="InParanoid" id="P14195"/>
<dbReference type="OMA" id="CKYWKKV"/>
<dbReference type="PRO" id="PR:P14195"/>
<dbReference type="Proteomes" id="UP000002195">
    <property type="component" value="Chromosome 6"/>
</dbReference>
<dbReference type="Gene3D" id="3.80.10.10">
    <property type="entry name" value="Ribonuclease Inhibitor"/>
    <property type="match status" value="2"/>
</dbReference>
<dbReference type="InterPro" id="IPR001611">
    <property type="entry name" value="Leu-rich_rpt"/>
</dbReference>
<dbReference type="InterPro" id="IPR052201">
    <property type="entry name" value="LRR-containing_regulator"/>
</dbReference>
<dbReference type="InterPro" id="IPR032675">
    <property type="entry name" value="LRR_dom_sf"/>
</dbReference>
<dbReference type="PANTHER" id="PTHR24111:SF0">
    <property type="entry name" value="LEUCINE-RICH REPEAT-CONTAINING PROTEIN"/>
    <property type="match status" value="1"/>
</dbReference>
<dbReference type="PANTHER" id="PTHR24111">
    <property type="entry name" value="LEUCINE-RICH REPEAT-CONTAINING PROTEIN 34"/>
    <property type="match status" value="1"/>
</dbReference>
<dbReference type="Pfam" id="PF13516">
    <property type="entry name" value="LRR_6"/>
    <property type="match status" value="4"/>
</dbReference>
<dbReference type="SMART" id="SM00368">
    <property type="entry name" value="LRR_RI"/>
    <property type="match status" value="7"/>
</dbReference>
<dbReference type="SUPFAM" id="SSF52047">
    <property type="entry name" value="RNI-like"/>
    <property type="match status" value="1"/>
</dbReference>
<feature type="chain" id="PRO_0000064408" description="Leucine-rich repeat-containing protein AAC1">
    <location>
        <begin position="1"/>
        <end position="797"/>
    </location>
</feature>
<feature type="repeat" description="LRR 1">
    <location>
        <begin position="376"/>
        <end position="397"/>
    </location>
</feature>
<feature type="repeat" description="LRR 2">
    <location>
        <begin position="406"/>
        <end position="425"/>
    </location>
</feature>
<feature type="repeat" description="LRR 3">
    <location>
        <begin position="435"/>
        <end position="456"/>
    </location>
</feature>
<feature type="repeat" description="LRR 4">
    <location>
        <begin position="464"/>
        <end position="484"/>
    </location>
</feature>
<feature type="repeat" description="LRR 5">
    <location>
        <begin position="492"/>
        <end position="513"/>
    </location>
</feature>
<feature type="repeat" description="LRR 6">
    <location>
        <begin position="514"/>
        <end position="535"/>
    </location>
</feature>
<feature type="repeat" description="LRR 7">
    <location>
        <begin position="543"/>
        <end position="564"/>
    </location>
</feature>
<feature type="repeat" description="LRR 8">
    <location>
        <begin position="572"/>
        <end position="593"/>
    </location>
</feature>
<feature type="repeat" description="LRR 9">
    <location>
        <begin position="601"/>
        <end position="622"/>
    </location>
</feature>
<feature type="repeat" description="LRR 10">
    <location>
        <begin position="633"/>
        <end position="653"/>
    </location>
</feature>
<feature type="region of interest" description="Disordered" evidence="1">
    <location>
        <begin position="1"/>
        <end position="20"/>
    </location>
</feature>
<feature type="region of interest" description="Disordered" evidence="1">
    <location>
        <begin position="51"/>
        <end position="103"/>
    </location>
</feature>
<feature type="region of interest" description="Disordered" evidence="1">
    <location>
        <begin position="125"/>
        <end position="148"/>
    </location>
</feature>
<feature type="region of interest" description="Disordered" evidence="1">
    <location>
        <begin position="307"/>
        <end position="333"/>
    </location>
</feature>
<feature type="compositionally biased region" description="Basic and acidic residues" evidence="1">
    <location>
        <begin position="1"/>
        <end position="12"/>
    </location>
</feature>
<feature type="compositionally biased region" description="Polar residues" evidence="1">
    <location>
        <begin position="55"/>
        <end position="81"/>
    </location>
</feature>
<feature type="compositionally biased region" description="Low complexity" evidence="1">
    <location>
        <begin position="82"/>
        <end position="103"/>
    </location>
</feature>
<feature type="compositionally biased region" description="Pro residues" evidence="1">
    <location>
        <begin position="313"/>
        <end position="326"/>
    </location>
</feature>
<feature type="sequence conflict" description="In Ref. 2; CAA34532." evidence="3" ref="2">
    <location>
        <begin position="141"/>
        <end position="146"/>
    </location>
</feature>
<proteinExistence type="evidence at transcript level"/>
<evidence type="ECO:0000256" key="1">
    <source>
        <dbReference type="SAM" id="MobiDB-lite"/>
    </source>
</evidence>
<evidence type="ECO:0000269" key="2">
    <source>
    </source>
</evidence>
<evidence type="ECO:0000305" key="3"/>
<reference key="1">
    <citation type="journal article" date="2005" name="Nature">
        <title>The genome of the social amoeba Dictyostelium discoideum.</title>
        <authorList>
            <person name="Eichinger L."/>
            <person name="Pachebat J.A."/>
            <person name="Gloeckner G."/>
            <person name="Rajandream M.A."/>
            <person name="Sucgang R."/>
            <person name="Berriman M."/>
            <person name="Song J."/>
            <person name="Olsen R."/>
            <person name="Szafranski K."/>
            <person name="Xu Q."/>
            <person name="Tunggal B."/>
            <person name="Kummerfeld S."/>
            <person name="Madera M."/>
            <person name="Konfortov B.A."/>
            <person name="Rivero F."/>
            <person name="Bankier A.T."/>
            <person name="Lehmann R."/>
            <person name="Hamlin N."/>
            <person name="Davies R."/>
            <person name="Gaudet P."/>
            <person name="Fey P."/>
            <person name="Pilcher K."/>
            <person name="Chen G."/>
            <person name="Saunders D."/>
            <person name="Sodergren E.J."/>
            <person name="Davis P."/>
            <person name="Kerhornou A."/>
            <person name="Nie X."/>
            <person name="Hall N."/>
            <person name="Anjard C."/>
            <person name="Hemphill L."/>
            <person name="Bason N."/>
            <person name="Farbrother P."/>
            <person name="Desany B."/>
            <person name="Just E."/>
            <person name="Morio T."/>
            <person name="Rost R."/>
            <person name="Churcher C.M."/>
            <person name="Cooper J."/>
            <person name="Haydock S."/>
            <person name="van Driessche N."/>
            <person name="Cronin A."/>
            <person name="Goodhead I."/>
            <person name="Muzny D.M."/>
            <person name="Mourier T."/>
            <person name="Pain A."/>
            <person name="Lu M."/>
            <person name="Harper D."/>
            <person name="Lindsay R."/>
            <person name="Hauser H."/>
            <person name="James K.D."/>
            <person name="Quiles M."/>
            <person name="Madan Babu M."/>
            <person name="Saito T."/>
            <person name="Buchrieser C."/>
            <person name="Wardroper A."/>
            <person name="Felder M."/>
            <person name="Thangavelu M."/>
            <person name="Johnson D."/>
            <person name="Knights A."/>
            <person name="Loulseged H."/>
            <person name="Mungall K.L."/>
            <person name="Oliver K."/>
            <person name="Price C."/>
            <person name="Quail M.A."/>
            <person name="Urushihara H."/>
            <person name="Hernandez J."/>
            <person name="Rabbinowitsch E."/>
            <person name="Steffen D."/>
            <person name="Sanders M."/>
            <person name="Ma J."/>
            <person name="Kohara Y."/>
            <person name="Sharp S."/>
            <person name="Simmonds M.N."/>
            <person name="Spiegler S."/>
            <person name="Tivey A."/>
            <person name="Sugano S."/>
            <person name="White B."/>
            <person name="Walker D."/>
            <person name="Woodward J.R."/>
            <person name="Winckler T."/>
            <person name="Tanaka Y."/>
            <person name="Shaulsky G."/>
            <person name="Schleicher M."/>
            <person name="Weinstock G.M."/>
            <person name="Rosenthal A."/>
            <person name="Cox E.C."/>
            <person name="Chisholm R.L."/>
            <person name="Gibbs R.A."/>
            <person name="Loomis W.F."/>
            <person name="Platzer M."/>
            <person name="Kay R.R."/>
            <person name="Williams J.G."/>
            <person name="Dear P.H."/>
            <person name="Noegel A.A."/>
            <person name="Barrell B.G."/>
            <person name="Kuspa A."/>
        </authorList>
    </citation>
    <scope>NUCLEOTIDE SEQUENCE [LARGE SCALE GENOMIC DNA]</scope>
    <source>
        <strain>AX4</strain>
    </source>
</reference>
<reference key="2">
    <citation type="journal article" date="1989" name="Mol. Gen. Genet.">
        <title>Nucleotide sequences of Dictyostelium discoideum developmentally regulated cDNAs rich in (AAC) imply proteins that contain clusters of asparagine, glutamine, or threonine.</title>
        <authorList>
            <person name="Shaw D.R."/>
            <person name="Richter H."/>
            <person name="Giorda R."/>
            <person name="Ohmachi T."/>
            <person name="Ennis H.L."/>
        </authorList>
    </citation>
    <scope>NUCLEOTIDE SEQUENCE [MRNA] OF 60-248</scope>
    <scope>DEVELOPMENTAL STAGE</scope>
</reference>
<organism>
    <name type="scientific">Dictyostelium discoideum</name>
    <name type="common">Social amoeba</name>
    <dbReference type="NCBI Taxonomy" id="44689"/>
    <lineage>
        <taxon>Eukaryota</taxon>
        <taxon>Amoebozoa</taxon>
        <taxon>Evosea</taxon>
        <taxon>Eumycetozoa</taxon>
        <taxon>Dictyostelia</taxon>
        <taxon>Dictyosteliales</taxon>
        <taxon>Dictyosteliaceae</taxon>
        <taxon>Dictyostelium</taxon>
    </lineage>
</organism>
<gene>
    <name type="primary">AAC1</name>
    <name type="ORF">DDB_G0291860</name>
</gene>
<accession>P14195</accession>
<accession>Q54E23</accession>
<keyword id="KW-0433">Leucine-rich repeat</keyword>
<keyword id="KW-1185">Reference proteome</keyword>
<keyword id="KW-0677">Repeat</keyword>
<protein>
    <recommendedName>
        <fullName>Leucine-rich repeat-containing protein AAC1</fullName>
    </recommendedName>
    <alternativeName>
        <fullName>AAC-rich mRNA clone AAC1 protein</fullName>
    </alternativeName>
</protein>
<name>AAC1_DICDI</name>